<dbReference type="EMBL" id="AM167904">
    <property type="protein sequence ID" value="CAJ51022.1"/>
    <property type="molecule type" value="Genomic_DNA"/>
</dbReference>
<dbReference type="RefSeq" id="WP_012419048.1">
    <property type="nucleotide sequence ID" value="NC_010645.1"/>
</dbReference>
<dbReference type="SMR" id="Q2KTI9"/>
<dbReference type="STRING" id="360910.BAV3412"/>
<dbReference type="GeneID" id="92933327"/>
<dbReference type="KEGG" id="bav:BAV3412"/>
<dbReference type="eggNOG" id="COG0593">
    <property type="taxonomic scope" value="Bacteria"/>
</dbReference>
<dbReference type="HOGENOM" id="CLU_026910_0_1_4"/>
<dbReference type="OrthoDB" id="9807019at2"/>
<dbReference type="Proteomes" id="UP000001977">
    <property type="component" value="Chromosome"/>
</dbReference>
<dbReference type="GO" id="GO:0005737">
    <property type="term" value="C:cytoplasm"/>
    <property type="evidence" value="ECO:0007669"/>
    <property type="project" value="UniProtKB-SubCell"/>
</dbReference>
<dbReference type="GO" id="GO:0005886">
    <property type="term" value="C:plasma membrane"/>
    <property type="evidence" value="ECO:0007669"/>
    <property type="project" value="TreeGrafter"/>
</dbReference>
<dbReference type="GO" id="GO:0005524">
    <property type="term" value="F:ATP binding"/>
    <property type="evidence" value="ECO:0007669"/>
    <property type="project" value="UniProtKB-UniRule"/>
</dbReference>
<dbReference type="GO" id="GO:0016887">
    <property type="term" value="F:ATP hydrolysis activity"/>
    <property type="evidence" value="ECO:0007669"/>
    <property type="project" value="InterPro"/>
</dbReference>
<dbReference type="GO" id="GO:0003688">
    <property type="term" value="F:DNA replication origin binding"/>
    <property type="evidence" value="ECO:0007669"/>
    <property type="project" value="UniProtKB-UniRule"/>
</dbReference>
<dbReference type="GO" id="GO:0008289">
    <property type="term" value="F:lipid binding"/>
    <property type="evidence" value="ECO:0007669"/>
    <property type="project" value="UniProtKB-KW"/>
</dbReference>
<dbReference type="GO" id="GO:0006270">
    <property type="term" value="P:DNA replication initiation"/>
    <property type="evidence" value="ECO:0007669"/>
    <property type="project" value="UniProtKB-UniRule"/>
</dbReference>
<dbReference type="GO" id="GO:0006275">
    <property type="term" value="P:regulation of DNA replication"/>
    <property type="evidence" value="ECO:0007669"/>
    <property type="project" value="UniProtKB-UniRule"/>
</dbReference>
<dbReference type="CDD" id="cd00009">
    <property type="entry name" value="AAA"/>
    <property type="match status" value="1"/>
</dbReference>
<dbReference type="CDD" id="cd06571">
    <property type="entry name" value="Bac_DnaA_C"/>
    <property type="match status" value="1"/>
</dbReference>
<dbReference type="FunFam" id="1.10.8.60:FF:000003">
    <property type="entry name" value="Chromosomal replication initiator protein DnaA"/>
    <property type="match status" value="1"/>
</dbReference>
<dbReference type="FunFam" id="3.40.50.300:FF:000668">
    <property type="entry name" value="Chromosomal replication initiator protein DnaA"/>
    <property type="match status" value="1"/>
</dbReference>
<dbReference type="Gene3D" id="1.10.1750.10">
    <property type="match status" value="1"/>
</dbReference>
<dbReference type="Gene3D" id="1.10.8.60">
    <property type="match status" value="1"/>
</dbReference>
<dbReference type="Gene3D" id="3.30.300.180">
    <property type="match status" value="1"/>
</dbReference>
<dbReference type="Gene3D" id="3.40.50.300">
    <property type="entry name" value="P-loop containing nucleotide triphosphate hydrolases"/>
    <property type="match status" value="1"/>
</dbReference>
<dbReference type="HAMAP" id="MF_00377">
    <property type="entry name" value="DnaA_bact"/>
    <property type="match status" value="1"/>
</dbReference>
<dbReference type="InterPro" id="IPR003593">
    <property type="entry name" value="AAA+_ATPase"/>
</dbReference>
<dbReference type="InterPro" id="IPR001957">
    <property type="entry name" value="Chromosome_initiator_DnaA"/>
</dbReference>
<dbReference type="InterPro" id="IPR020591">
    <property type="entry name" value="Chromosome_initiator_DnaA-like"/>
</dbReference>
<dbReference type="InterPro" id="IPR018312">
    <property type="entry name" value="Chromosome_initiator_DnaA_CS"/>
</dbReference>
<dbReference type="InterPro" id="IPR013159">
    <property type="entry name" value="DnaA_C"/>
</dbReference>
<dbReference type="InterPro" id="IPR013317">
    <property type="entry name" value="DnaA_dom"/>
</dbReference>
<dbReference type="InterPro" id="IPR024633">
    <property type="entry name" value="DnaA_N_dom"/>
</dbReference>
<dbReference type="InterPro" id="IPR038454">
    <property type="entry name" value="DnaA_N_sf"/>
</dbReference>
<dbReference type="InterPro" id="IPR027417">
    <property type="entry name" value="P-loop_NTPase"/>
</dbReference>
<dbReference type="InterPro" id="IPR010921">
    <property type="entry name" value="Trp_repressor/repl_initiator"/>
</dbReference>
<dbReference type="NCBIfam" id="TIGR00362">
    <property type="entry name" value="DnaA"/>
    <property type="match status" value="1"/>
</dbReference>
<dbReference type="PANTHER" id="PTHR30050">
    <property type="entry name" value="CHROMOSOMAL REPLICATION INITIATOR PROTEIN DNAA"/>
    <property type="match status" value="1"/>
</dbReference>
<dbReference type="PANTHER" id="PTHR30050:SF2">
    <property type="entry name" value="CHROMOSOMAL REPLICATION INITIATOR PROTEIN DNAA"/>
    <property type="match status" value="1"/>
</dbReference>
<dbReference type="Pfam" id="PF00308">
    <property type="entry name" value="Bac_DnaA"/>
    <property type="match status" value="1"/>
</dbReference>
<dbReference type="Pfam" id="PF08299">
    <property type="entry name" value="Bac_DnaA_C"/>
    <property type="match status" value="1"/>
</dbReference>
<dbReference type="Pfam" id="PF11638">
    <property type="entry name" value="DnaA_N"/>
    <property type="match status" value="1"/>
</dbReference>
<dbReference type="PRINTS" id="PR00051">
    <property type="entry name" value="DNAA"/>
</dbReference>
<dbReference type="SMART" id="SM00382">
    <property type="entry name" value="AAA"/>
    <property type="match status" value="1"/>
</dbReference>
<dbReference type="SMART" id="SM00760">
    <property type="entry name" value="Bac_DnaA_C"/>
    <property type="match status" value="1"/>
</dbReference>
<dbReference type="SUPFAM" id="SSF52540">
    <property type="entry name" value="P-loop containing nucleoside triphosphate hydrolases"/>
    <property type="match status" value="1"/>
</dbReference>
<dbReference type="SUPFAM" id="SSF48295">
    <property type="entry name" value="TrpR-like"/>
    <property type="match status" value="1"/>
</dbReference>
<dbReference type="PROSITE" id="PS01008">
    <property type="entry name" value="DNAA"/>
    <property type="match status" value="1"/>
</dbReference>
<feature type="chain" id="PRO_1000048608" description="Chromosomal replication initiator protein DnaA">
    <location>
        <begin position="1"/>
        <end position="483"/>
    </location>
</feature>
<feature type="region of interest" description="Domain I, interacts with DnaA modulators" evidence="1">
    <location>
        <begin position="1"/>
        <end position="71"/>
    </location>
</feature>
<feature type="region of interest" description="Domain II" evidence="1">
    <location>
        <begin position="71"/>
        <end position="145"/>
    </location>
</feature>
<feature type="region of interest" description="Domain III, AAA+ region" evidence="1">
    <location>
        <begin position="146"/>
        <end position="362"/>
    </location>
</feature>
<feature type="region of interest" description="Domain IV, binds dsDNA" evidence="1">
    <location>
        <begin position="363"/>
        <end position="483"/>
    </location>
</feature>
<feature type="binding site" evidence="1">
    <location>
        <position position="190"/>
    </location>
    <ligand>
        <name>ATP</name>
        <dbReference type="ChEBI" id="CHEBI:30616"/>
    </ligand>
</feature>
<feature type="binding site" evidence="1">
    <location>
        <position position="192"/>
    </location>
    <ligand>
        <name>ATP</name>
        <dbReference type="ChEBI" id="CHEBI:30616"/>
    </ligand>
</feature>
<feature type="binding site" evidence="1">
    <location>
        <position position="193"/>
    </location>
    <ligand>
        <name>ATP</name>
        <dbReference type="ChEBI" id="CHEBI:30616"/>
    </ligand>
</feature>
<feature type="binding site" evidence="1">
    <location>
        <position position="194"/>
    </location>
    <ligand>
        <name>ATP</name>
        <dbReference type="ChEBI" id="CHEBI:30616"/>
    </ligand>
</feature>
<organism>
    <name type="scientific">Bordetella avium (strain 197N)</name>
    <dbReference type="NCBI Taxonomy" id="360910"/>
    <lineage>
        <taxon>Bacteria</taxon>
        <taxon>Pseudomonadati</taxon>
        <taxon>Pseudomonadota</taxon>
        <taxon>Betaproteobacteria</taxon>
        <taxon>Burkholderiales</taxon>
        <taxon>Alcaligenaceae</taxon>
        <taxon>Bordetella</taxon>
    </lineage>
</organism>
<name>DNAA_BORA1</name>
<sequence length="483" mass="53678">MKEFWQTCVSRLEQELPPQQISAWIRPLVPLAYDEAQAVLRVAAPNRFKLDWVRKNFSHQIEALAAEWYQRPVQVQFELPSHSTTPRIPVTPRAAVAPVAPASAAPLAPAAPPVAAAYSAPPEPPAAPAQTSAAVDAANIVYERSRLNTDLTFENFVTGKANQLARAAALQVAENPGTSYNPLFLYGGVGLGKTHLIHAIGNAMVAAGTGVRVRYVHADQYVSDVVKAYQRKAFDDFKRYYHSLDLLLIDDIQFFSGKNRTQEEFFYAFEAMVAQRKQIIITSDTYPKELSGIDSRLISRFDSGLTVAIEPPELEMRVAILLRKAESEGVPMPEEVAFFIAKHLRSNVRELEGALRKVLAYARFHGREALNVDVCKEALKDLLSVSNGQITVENIQKTVADFYKIKVADMYSKRRPANIALPRQVAMYLAKELTQKSLPEIGDLFGGRDHTTVLHAVRKISDARAKQAELNHTLHVLEQTLKG</sequence>
<protein>
    <recommendedName>
        <fullName evidence="1">Chromosomal replication initiator protein DnaA</fullName>
    </recommendedName>
</protein>
<reference key="1">
    <citation type="journal article" date="2006" name="J. Bacteriol.">
        <title>Comparison of the genome sequence of the poultry pathogen Bordetella avium with those of B. bronchiseptica, B. pertussis, and B. parapertussis reveals extensive diversity in surface structures associated with host interaction.</title>
        <authorList>
            <person name="Sebaihia M."/>
            <person name="Preston A."/>
            <person name="Maskell D.J."/>
            <person name="Kuzmiak H."/>
            <person name="Connell T.D."/>
            <person name="King N.D."/>
            <person name="Orndorff P.E."/>
            <person name="Miyamoto D.M."/>
            <person name="Thomson N.R."/>
            <person name="Harris D."/>
            <person name="Goble A."/>
            <person name="Lord A."/>
            <person name="Murphy L."/>
            <person name="Quail M.A."/>
            <person name="Rutter S."/>
            <person name="Squares R."/>
            <person name="Squares S."/>
            <person name="Woodward J."/>
            <person name="Parkhill J."/>
            <person name="Temple L.M."/>
        </authorList>
    </citation>
    <scope>NUCLEOTIDE SEQUENCE [LARGE SCALE GENOMIC DNA]</scope>
    <source>
        <strain>197N</strain>
    </source>
</reference>
<evidence type="ECO:0000255" key="1">
    <source>
        <dbReference type="HAMAP-Rule" id="MF_00377"/>
    </source>
</evidence>
<accession>Q2KTI9</accession>
<keyword id="KW-0067">ATP-binding</keyword>
<keyword id="KW-0963">Cytoplasm</keyword>
<keyword id="KW-0235">DNA replication</keyword>
<keyword id="KW-0238">DNA-binding</keyword>
<keyword id="KW-0446">Lipid-binding</keyword>
<keyword id="KW-0547">Nucleotide-binding</keyword>
<keyword id="KW-1185">Reference proteome</keyword>
<proteinExistence type="inferred from homology"/>
<gene>
    <name evidence="1" type="primary">dnaA</name>
    <name type="ordered locus">BAV3412</name>
</gene>
<comment type="function">
    <text evidence="1">Plays an essential role in the initiation and regulation of chromosomal replication. ATP-DnaA binds to the origin of replication (oriC) to initiate formation of the DNA replication initiation complex once per cell cycle. Binds the DnaA box (a 9 base pair repeat at the origin) and separates the double-stranded (ds)DNA. Forms a right-handed helical filament on oriC DNA; dsDNA binds to the exterior of the filament while single-stranded (ss)DNA is stabiized in the filament's interior. The ATP-DnaA-oriC complex binds and stabilizes one strand of the AT-rich DNA unwinding element (DUE), permitting loading of DNA polymerase. After initiation quickly degrades to an ADP-DnaA complex that is not apt for DNA replication. Binds acidic phospholipids.</text>
</comment>
<comment type="subunit">
    <text evidence="1">Oligomerizes as a right-handed, spiral filament on DNA at oriC.</text>
</comment>
<comment type="subcellular location">
    <subcellularLocation>
        <location evidence="1">Cytoplasm</location>
    </subcellularLocation>
</comment>
<comment type="domain">
    <text evidence="1">Domain I is involved in oligomerization and binding regulators, domain II is flexibile and of varying length in different bacteria, domain III forms the AAA+ region, while domain IV binds dsDNA.</text>
</comment>
<comment type="similarity">
    <text evidence="1">Belongs to the DnaA family.</text>
</comment>